<feature type="chain" id="PRO_0000093867" description="Serine protease Do-like HtrB">
    <location>
        <begin position="1"/>
        <end position="458"/>
    </location>
</feature>
<feature type="topological domain" description="Cytoplasmic" evidence="2">
    <location>
        <begin position="1"/>
        <end position="71"/>
    </location>
</feature>
<feature type="transmembrane region" description="Helical" evidence="2">
    <location>
        <begin position="72"/>
        <end position="92"/>
    </location>
</feature>
<feature type="topological domain" description="Extracellular" evidence="2">
    <location>
        <begin position="93"/>
        <end position="458"/>
    </location>
</feature>
<feature type="domain" description="PDZ" evidence="3">
    <location>
        <begin position="356"/>
        <end position="440"/>
    </location>
</feature>
<feature type="region of interest" description="Disordered" evidence="4">
    <location>
        <begin position="1"/>
        <end position="42"/>
    </location>
</feature>
<feature type="region of interest" description="Disordered" evidence="4">
    <location>
        <begin position="146"/>
        <end position="170"/>
    </location>
</feature>
<feature type="compositionally biased region" description="Basic and acidic residues" evidence="4">
    <location>
        <begin position="1"/>
        <end position="18"/>
    </location>
</feature>
<feature type="active site" description="Charge relay system" evidence="2">
    <location>
        <position position="187"/>
    </location>
</feature>
<feature type="active site" description="Charge relay system" evidence="2">
    <location>
        <position position="217"/>
    </location>
</feature>
<feature type="active site" description="Charge relay system" evidence="2">
    <location>
        <position position="298"/>
    </location>
</feature>
<feature type="binding site" evidence="1">
    <location>
        <begin position="296"/>
        <end position="298"/>
    </location>
    <ligand>
        <name>substrate</name>
    </ligand>
</feature>
<feature type="binding site" evidence="1">
    <location>
        <begin position="352"/>
        <end position="356"/>
    </location>
    <ligand>
        <name>substrate</name>
    </ligand>
</feature>
<keyword id="KW-1003">Cell membrane</keyword>
<keyword id="KW-0378">Hydrolase</keyword>
<keyword id="KW-0472">Membrane</keyword>
<keyword id="KW-0645">Protease</keyword>
<keyword id="KW-1185">Reference proteome</keyword>
<keyword id="KW-0720">Serine protease</keyword>
<keyword id="KW-0346">Stress response</keyword>
<keyword id="KW-0812">Transmembrane</keyword>
<keyword id="KW-1133">Transmembrane helix</keyword>
<protein>
    <recommendedName>
        <fullName>Serine protease Do-like HtrB</fullName>
        <ecNumber>3.4.21.107</ecNumber>
    </recommendedName>
    <alternativeName>
        <fullName>HtrA-like serine protease</fullName>
    </alternativeName>
</protein>
<comment type="function">
    <text evidence="6">Degrades abnormal exported proteins and responsible for the propeptide processing of a natural pro-protein and for the maturation of a native protein. It also plays a prominent role in stress (heat shock, ethanol, puromycin and NaCl) resistance during active exponential growth (Probable).</text>
</comment>
<comment type="catalytic activity">
    <reaction>
        <text>Acts on substrates that are at least partially unfolded. The cleavage site P1 residue is normally between a pair of hydrophobic residues, such as Val-|-Val.</text>
        <dbReference type="EC" id="3.4.21.107"/>
    </reaction>
</comment>
<comment type="subcellular location">
    <subcellularLocation>
        <location evidence="6">Cell membrane</location>
        <topology evidence="6">Single-pass membrane protein</topology>
    </subcellularLocation>
</comment>
<comment type="induction">
    <text evidence="5">Induced by heat shock during exponential growth and by heterologous amylases at the transition phase of the growth cycle. Negatively regulates its own expression.</text>
</comment>
<comment type="disruption phenotype">
    <text evidence="5">In contrast to other bacteria, in which inactivation of serine protease leads to thermosensitivity, inactivation of HtrB leads to an increased thermotolerance and an increased tolerance to hydrogen peroxide. Inactivation of both HtrA and HtrB leads to growth defects and to thermosensitivity.</text>
</comment>
<comment type="miscellaneous">
    <text>Inactivation results in compensating overexpression of YkdA, especially during stress conditions.</text>
</comment>
<comment type="similarity">
    <text evidence="6">Belongs to the peptidase S1C family.</text>
</comment>
<comment type="sequence caution" evidence="6">
    <conflict type="frameshift">
        <sequence resource="EMBL-CDS" id="CAB07968"/>
    </conflict>
    <text>Produces two separate ORFs.</text>
</comment>
<comment type="sequence caution" evidence="6">
    <conflict type="frameshift">
        <sequence resource="EMBL-CDS" id="CAB07969"/>
    </conflict>
    <text>Produces two separate ORFs.</text>
</comment>
<reference key="1">
    <citation type="journal article" date="2000" name="J. Bacteriol.">
        <title>Expression of ykdA, encoding a Bacillus subtilis homologue of HtrA, is heat shock inducible and negatively autoregulated.</title>
        <authorList>
            <person name="Noone D."/>
            <person name="Howell A."/>
            <person name="Devine K.M."/>
        </authorList>
    </citation>
    <scope>NUCLEOTIDE SEQUENCE [GENOMIC DNA]</scope>
    <source>
        <strain>168</strain>
    </source>
</reference>
<reference key="2">
    <citation type="journal article" date="1997" name="Microbiology">
        <title>Sequencing of regions downstream of addA (98 degrees) and citG (289 degrees) in Bacillus subtilis.</title>
        <authorList>
            <person name="Medina N."/>
            <person name="Vannier F."/>
            <person name="Roche B."/>
            <person name="Autret S."/>
            <person name="Levine A."/>
            <person name="Seror S.J."/>
        </authorList>
    </citation>
    <scope>NUCLEOTIDE SEQUENCE [GENOMIC DNA]</scope>
</reference>
<reference key="3">
    <citation type="journal article" date="1997" name="Nature">
        <title>The complete genome sequence of the Gram-positive bacterium Bacillus subtilis.</title>
        <authorList>
            <person name="Kunst F."/>
            <person name="Ogasawara N."/>
            <person name="Moszer I."/>
            <person name="Albertini A.M."/>
            <person name="Alloni G."/>
            <person name="Azevedo V."/>
            <person name="Bertero M.G."/>
            <person name="Bessieres P."/>
            <person name="Bolotin A."/>
            <person name="Borchert S."/>
            <person name="Borriss R."/>
            <person name="Boursier L."/>
            <person name="Brans A."/>
            <person name="Braun M."/>
            <person name="Brignell S.C."/>
            <person name="Bron S."/>
            <person name="Brouillet S."/>
            <person name="Bruschi C.V."/>
            <person name="Caldwell B."/>
            <person name="Capuano V."/>
            <person name="Carter N.M."/>
            <person name="Choi S.-K."/>
            <person name="Codani J.-J."/>
            <person name="Connerton I.F."/>
            <person name="Cummings N.J."/>
            <person name="Daniel R.A."/>
            <person name="Denizot F."/>
            <person name="Devine K.M."/>
            <person name="Duesterhoeft A."/>
            <person name="Ehrlich S.D."/>
            <person name="Emmerson P.T."/>
            <person name="Entian K.-D."/>
            <person name="Errington J."/>
            <person name="Fabret C."/>
            <person name="Ferrari E."/>
            <person name="Foulger D."/>
            <person name="Fritz C."/>
            <person name="Fujita M."/>
            <person name="Fujita Y."/>
            <person name="Fuma S."/>
            <person name="Galizzi A."/>
            <person name="Galleron N."/>
            <person name="Ghim S.-Y."/>
            <person name="Glaser P."/>
            <person name="Goffeau A."/>
            <person name="Golightly E.J."/>
            <person name="Grandi G."/>
            <person name="Guiseppi G."/>
            <person name="Guy B.J."/>
            <person name="Haga K."/>
            <person name="Haiech J."/>
            <person name="Harwood C.R."/>
            <person name="Henaut A."/>
            <person name="Hilbert H."/>
            <person name="Holsappel S."/>
            <person name="Hosono S."/>
            <person name="Hullo M.-F."/>
            <person name="Itaya M."/>
            <person name="Jones L.-M."/>
            <person name="Joris B."/>
            <person name="Karamata D."/>
            <person name="Kasahara Y."/>
            <person name="Klaerr-Blanchard M."/>
            <person name="Klein C."/>
            <person name="Kobayashi Y."/>
            <person name="Koetter P."/>
            <person name="Koningstein G."/>
            <person name="Krogh S."/>
            <person name="Kumano M."/>
            <person name="Kurita K."/>
            <person name="Lapidus A."/>
            <person name="Lardinois S."/>
            <person name="Lauber J."/>
            <person name="Lazarevic V."/>
            <person name="Lee S.-M."/>
            <person name="Levine A."/>
            <person name="Liu H."/>
            <person name="Masuda S."/>
            <person name="Mauel C."/>
            <person name="Medigue C."/>
            <person name="Medina N."/>
            <person name="Mellado R.P."/>
            <person name="Mizuno M."/>
            <person name="Moestl D."/>
            <person name="Nakai S."/>
            <person name="Noback M."/>
            <person name="Noone D."/>
            <person name="O'Reilly M."/>
            <person name="Ogawa K."/>
            <person name="Ogiwara A."/>
            <person name="Oudega B."/>
            <person name="Park S.-H."/>
            <person name="Parro V."/>
            <person name="Pohl T.M."/>
            <person name="Portetelle D."/>
            <person name="Porwollik S."/>
            <person name="Prescott A.M."/>
            <person name="Presecan E."/>
            <person name="Pujic P."/>
            <person name="Purnelle B."/>
            <person name="Rapoport G."/>
            <person name="Rey M."/>
            <person name="Reynolds S."/>
            <person name="Rieger M."/>
            <person name="Rivolta C."/>
            <person name="Rocha E."/>
            <person name="Roche B."/>
            <person name="Rose M."/>
            <person name="Sadaie Y."/>
            <person name="Sato T."/>
            <person name="Scanlan E."/>
            <person name="Schleich S."/>
            <person name="Schroeter R."/>
            <person name="Scoffone F."/>
            <person name="Sekiguchi J."/>
            <person name="Sekowska A."/>
            <person name="Seror S.J."/>
            <person name="Serror P."/>
            <person name="Shin B.-S."/>
            <person name="Soldo B."/>
            <person name="Sorokin A."/>
            <person name="Tacconi E."/>
            <person name="Takagi T."/>
            <person name="Takahashi H."/>
            <person name="Takemaru K."/>
            <person name="Takeuchi M."/>
            <person name="Tamakoshi A."/>
            <person name="Tanaka T."/>
            <person name="Terpstra P."/>
            <person name="Tognoni A."/>
            <person name="Tosato V."/>
            <person name="Uchiyama S."/>
            <person name="Vandenbol M."/>
            <person name="Vannier F."/>
            <person name="Vassarotti A."/>
            <person name="Viari A."/>
            <person name="Wambutt R."/>
            <person name="Wedler E."/>
            <person name="Wedler H."/>
            <person name="Weitzenegger T."/>
            <person name="Winters P."/>
            <person name="Wipat A."/>
            <person name="Yamamoto H."/>
            <person name="Yamane K."/>
            <person name="Yasumoto K."/>
            <person name="Yata K."/>
            <person name="Yoshida K."/>
            <person name="Yoshikawa H.-F."/>
            <person name="Zumstein E."/>
            <person name="Yoshikawa H."/>
            <person name="Danchin A."/>
        </authorList>
    </citation>
    <scope>NUCLEOTIDE SEQUENCE [LARGE SCALE GENOMIC DNA]</scope>
    <source>
        <strain>168</strain>
    </source>
</reference>
<reference key="4">
    <citation type="journal article" date="1999" name="Genome Res.">
        <title>Detecting and analyzing DNA sequencing errors: toward a higher quality of the Bacillus subtilis genome sequence.</title>
        <authorList>
            <person name="Medigue C."/>
            <person name="Rose M."/>
            <person name="Viari A."/>
            <person name="Danchin A."/>
        </authorList>
    </citation>
    <scope>SEQUENCE REVISION</scope>
</reference>
<reference key="5">
    <citation type="journal article" date="2001" name="J. Bacteriol.">
        <title>YkdA and YvtA, HtrA-like serine proteases in Bacillus subtilis, engage in negative autoregulation and reciprocal cross-regulation of ykdA and yvtA gene expression.</title>
        <authorList>
            <person name="Noone D."/>
            <person name="Howell A."/>
            <person name="Collery R."/>
            <person name="Devine K.M."/>
        </authorList>
    </citation>
    <scope>INDUCTION</scope>
    <scope>DISRUPTION PHENOTYPE</scope>
    <source>
        <strain>168</strain>
    </source>
</reference>
<evidence type="ECO:0000250" key="1"/>
<evidence type="ECO:0000255" key="2"/>
<evidence type="ECO:0000255" key="3">
    <source>
        <dbReference type="PROSITE-ProRule" id="PRU00143"/>
    </source>
</evidence>
<evidence type="ECO:0000256" key="4">
    <source>
        <dbReference type="SAM" id="MobiDB-lite"/>
    </source>
</evidence>
<evidence type="ECO:0000269" key="5">
    <source>
    </source>
</evidence>
<evidence type="ECO:0000305" key="6"/>
<proteinExistence type="evidence at transcript level"/>
<dbReference type="EC" id="3.4.21.107"/>
<dbReference type="EMBL" id="AF188296">
    <property type="protein sequence ID" value="AAF03153.1"/>
    <property type="molecule type" value="Genomic_DNA"/>
</dbReference>
<dbReference type="EMBL" id="Z93941">
    <property type="protein sequence ID" value="CAB07968.1"/>
    <property type="status" value="ALT_FRAME"/>
    <property type="molecule type" value="Genomic_DNA"/>
</dbReference>
<dbReference type="EMBL" id="Z93941">
    <property type="protein sequence ID" value="CAB07969.1"/>
    <property type="status" value="ALT_FRAME"/>
    <property type="molecule type" value="Genomic_DNA"/>
</dbReference>
<dbReference type="EMBL" id="AL009126">
    <property type="protein sequence ID" value="CAB15290.2"/>
    <property type="molecule type" value="Genomic_DNA"/>
</dbReference>
<dbReference type="PIR" id="E70048">
    <property type="entry name" value="E70048"/>
</dbReference>
<dbReference type="PIR" id="F70048">
    <property type="entry name" value="F70048"/>
</dbReference>
<dbReference type="RefSeq" id="NP_391180.2">
    <property type="nucleotide sequence ID" value="NC_000964.3"/>
</dbReference>
<dbReference type="RefSeq" id="WP_003228534.1">
    <property type="nucleotide sequence ID" value="NZ_OZ025638.1"/>
</dbReference>
<dbReference type="SMR" id="Q9R9I1"/>
<dbReference type="FunCoup" id="Q9R9I1">
    <property type="interactions" value="618"/>
</dbReference>
<dbReference type="IntAct" id="Q9R9I1">
    <property type="interactions" value="4"/>
</dbReference>
<dbReference type="STRING" id="224308.BSU33000"/>
<dbReference type="MEROPS" id="S01.B81"/>
<dbReference type="PaxDb" id="224308-BSU33000"/>
<dbReference type="EnsemblBacteria" id="CAB15290">
    <property type="protein sequence ID" value="CAB15290"/>
    <property type="gene ID" value="BSU_33000"/>
</dbReference>
<dbReference type="GeneID" id="935935"/>
<dbReference type="KEGG" id="bsu:BSU33000"/>
<dbReference type="PATRIC" id="fig|224308.179.peg.3576"/>
<dbReference type="eggNOG" id="COG0265">
    <property type="taxonomic scope" value="Bacteria"/>
</dbReference>
<dbReference type="InParanoid" id="Q9R9I1"/>
<dbReference type="OrthoDB" id="9758917at2"/>
<dbReference type="PhylomeDB" id="Q9R9I1"/>
<dbReference type="BioCyc" id="BSUB:BSU33000-MONOMER"/>
<dbReference type="Proteomes" id="UP000001570">
    <property type="component" value="Chromosome"/>
</dbReference>
<dbReference type="GO" id="GO:0005886">
    <property type="term" value="C:plasma membrane"/>
    <property type="evidence" value="ECO:0007669"/>
    <property type="project" value="UniProtKB-SubCell"/>
</dbReference>
<dbReference type="GO" id="GO:0004252">
    <property type="term" value="F:serine-type endopeptidase activity"/>
    <property type="evidence" value="ECO:0007669"/>
    <property type="project" value="InterPro"/>
</dbReference>
<dbReference type="GO" id="GO:0006508">
    <property type="term" value="P:proteolysis"/>
    <property type="evidence" value="ECO:0007669"/>
    <property type="project" value="UniProtKB-KW"/>
</dbReference>
<dbReference type="CDD" id="cd06781">
    <property type="entry name" value="cpPDZ_BsHtra-like"/>
    <property type="match status" value="1"/>
</dbReference>
<dbReference type="Gene3D" id="2.30.42.10">
    <property type="match status" value="1"/>
</dbReference>
<dbReference type="Gene3D" id="2.40.10.10">
    <property type="entry name" value="Trypsin-like serine proteases"/>
    <property type="match status" value="2"/>
</dbReference>
<dbReference type="InterPro" id="IPR051201">
    <property type="entry name" value="Chloro_Bact_Ser_Proteases"/>
</dbReference>
<dbReference type="InterPro" id="IPR001478">
    <property type="entry name" value="PDZ"/>
</dbReference>
<dbReference type="InterPro" id="IPR036034">
    <property type="entry name" value="PDZ_sf"/>
</dbReference>
<dbReference type="InterPro" id="IPR009003">
    <property type="entry name" value="Peptidase_S1_PA"/>
</dbReference>
<dbReference type="InterPro" id="IPR043504">
    <property type="entry name" value="Peptidase_S1_PA_chymotrypsin"/>
</dbReference>
<dbReference type="InterPro" id="IPR001940">
    <property type="entry name" value="Peptidase_S1C"/>
</dbReference>
<dbReference type="PANTHER" id="PTHR43343">
    <property type="entry name" value="PEPTIDASE S12"/>
    <property type="match status" value="1"/>
</dbReference>
<dbReference type="PANTHER" id="PTHR43343:SF3">
    <property type="entry name" value="PROTEASE DO-LIKE 8, CHLOROPLASTIC"/>
    <property type="match status" value="1"/>
</dbReference>
<dbReference type="Pfam" id="PF13180">
    <property type="entry name" value="PDZ_2"/>
    <property type="match status" value="1"/>
</dbReference>
<dbReference type="Pfam" id="PF13365">
    <property type="entry name" value="Trypsin_2"/>
    <property type="match status" value="1"/>
</dbReference>
<dbReference type="PRINTS" id="PR00834">
    <property type="entry name" value="PROTEASES2C"/>
</dbReference>
<dbReference type="SMART" id="SM00228">
    <property type="entry name" value="PDZ"/>
    <property type="match status" value="1"/>
</dbReference>
<dbReference type="SUPFAM" id="SSF50156">
    <property type="entry name" value="PDZ domain-like"/>
    <property type="match status" value="1"/>
</dbReference>
<dbReference type="SUPFAM" id="SSF50494">
    <property type="entry name" value="Trypsin-like serine proteases"/>
    <property type="match status" value="1"/>
</dbReference>
<dbReference type="PROSITE" id="PS50106">
    <property type="entry name" value="PDZ"/>
    <property type="match status" value="1"/>
</dbReference>
<sequence>MDYRRDGQNDQHQTEPSHTEQQNTENQKLIGHSEQELLDAPVSYEAGRQETASALEMEKQETAVKKEKKRRAAWLSPILGGIIGGGLMLGIAPYLPSDQNQATETASANKQVQSDNFTTAPITNASNIADMVEDLEPTIVGISNIQTSQNNTFGTGGGSSSESESGTGSGVIFKKDSDKAYIITNNHVVEGANKLTVTLYNGETETAKLVGSDTITDLAVLEISGKNVKKVASFGDSSQLRTGEKVIAIGNPLGQQFSGTVTQGIISGLNRTIDVDTTQGTVEMNVLQTDAAINPGNSGGPLINASGQVIGINSLKVSESGVESLGFAIPSNDVEPIVDQLLQNGKVDRPFLGVQMIDMSQVPETYQENTLGLFGDQLGKGVYVKEVQANSPAEKAGIKSEDVIVKLNGKDVESSADIRQILYKDLKVGDKTTIQVLRKGKTKTLNATLTKQTESSSS</sequence>
<accession>Q9R9I1</accession>
<accession>O35021</accession>
<accession>O35039</accession>
<gene>
    <name type="primary">htrB</name>
    <name type="synonym">yvtA</name>
    <name type="ordered locus">BSU33000</name>
</gene>
<organism>
    <name type="scientific">Bacillus subtilis (strain 168)</name>
    <dbReference type="NCBI Taxonomy" id="224308"/>
    <lineage>
        <taxon>Bacteria</taxon>
        <taxon>Bacillati</taxon>
        <taxon>Bacillota</taxon>
        <taxon>Bacilli</taxon>
        <taxon>Bacillales</taxon>
        <taxon>Bacillaceae</taxon>
        <taxon>Bacillus</taxon>
    </lineage>
</organism>
<name>HTRB_BACSU</name>